<protein>
    <recommendedName>
        <fullName evidence="1">Large ribosomal subunit protein bL32</fullName>
    </recommendedName>
    <alternativeName>
        <fullName evidence="3">50S ribosomal protein L32</fullName>
    </alternativeName>
</protein>
<evidence type="ECO:0000255" key="1">
    <source>
        <dbReference type="HAMAP-Rule" id="MF_00340"/>
    </source>
</evidence>
<evidence type="ECO:0000256" key="2">
    <source>
        <dbReference type="SAM" id="MobiDB-lite"/>
    </source>
</evidence>
<evidence type="ECO:0000305" key="3"/>
<proteinExistence type="inferred from homology"/>
<sequence>MGVPKRKTSKGRRDKRRAHLALSGPALAKCPQCNEMRLPHRVCPACGYYRDRAVLEFEEE</sequence>
<name>RL32_SYNFM</name>
<feature type="chain" id="PRO_0000296589" description="Large ribosomal subunit protein bL32">
    <location>
        <begin position="1"/>
        <end position="60"/>
    </location>
</feature>
<feature type="region of interest" description="Disordered" evidence="2">
    <location>
        <begin position="1"/>
        <end position="20"/>
    </location>
</feature>
<feature type="compositionally biased region" description="Basic residues" evidence="2">
    <location>
        <begin position="1"/>
        <end position="19"/>
    </location>
</feature>
<reference key="1">
    <citation type="submission" date="2006-10" db="EMBL/GenBank/DDBJ databases">
        <title>Complete sequence of Syntrophobacter fumaroxidans MPOB.</title>
        <authorList>
            <consortium name="US DOE Joint Genome Institute"/>
            <person name="Copeland A."/>
            <person name="Lucas S."/>
            <person name="Lapidus A."/>
            <person name="Barry K."/>
            <person name="Detter J.C."/>
            <person name="Glavina del Rio T."/>
            <person name="Hammon N."/>
            <person name="Israni S."/>
            <person name="Pitluck S."/>
            <person name="Goltsman E.G."/>
            <person name="Martinez M."/>
            <person name="Schmutz J."/>
            <person name="Larimer F."/>
            <person name="Land M."/>
            <person name="Hauser L."/>
            <person name="Kyrpides N."/>
            <person name="Kim E."/>
            <person name="Boone D.R."/>
            <person name="Brockman F."/>
            <person name="Culley D."/>
            <person name="Ferry J."/>
            <person name="Gunsalus R."/>
            <person name="McInerney M.J."/>
            <person name="Morrison M."/>
            <person name="Plugge C."/>
            <person name="Rohlin L."/>
            <person name="Scholten J."/>
            <person name="Sieber J."/>
            <person name="Stams A.J.M."/>
            <person name="Worm P."/>
            <person name="Henstra A.M."/>
            <person name="Richardson P."/>
        </authorList>
    </citation>
    <scope>NUCLEOTIDE SEQUENCE [LARGE SCALE GENOMIC DNA]</scope>
    <source>
        <strain>DSM 10017 / MPOB</strain>
    </source>
</reference>
<gene>
    <name evidence="1" type="primary">rpmF</name>
    <name type="ordered locus">Sfum_1369</name>
</gene>
<organism>
    <name type="scientific">Syntrophobacter fumaroxidans (strain DSM 10017 / MPOB)</name>
    <dbReference type="NCBI Taxonomy" id="335543"/>
    <lineage>
        <taxon>Bacteria</taxon>
        <taxon>Pseudomonadati</taxon>
        <taxon>Thermodesulfobacteriota</taxon>
        <taxon>Syntrophobacteria</taxon>
        <taxon>Syntrophobacterales</taxon>
        <taxon>Syntrophobacteraceae</taxon>
        <taxon>Syntrophobacter</taxon>
    </lineage>
</organism>
<accession>A0LI08</accession>
<keyword id="KW-1185">Reference proteome</keyword>
<keyword id="KW-0687">Ribonucleoprotein</keyword>
<keyword id="KW-0689">Ribosomal protein</keyword>
<dbReference type="EMBL" id="CP000478">
    <property type="protein sequence ID" value="ABK17060.1"/>
    <property type="molecule type" value="Genomic_DNA"/>
</dbReference>
<dbReference type="RefSeq" id="WP_011698231.1">
    <property type="nucleotide sequence ID" value="NC_008554.1"/>
</dbReference>
<dbReference type="SMR" id="A0LI08"/>
<dbReference type="STRING" id="335543.Sfum_1369"/>
<dbReference type="KEGG" id="sfu:Sfum_1369"/>
<dbReference type="eggNOG" id="COG0333">
    <property type="taxonomic scope" value="Bacteria"/>
</dbReference>
<dbReference type="HOGENOM" id="CLU_129084_1_3_7"/>
<dbReference type="InParanoid" id="A0LI08"/>
<dbReference type="OrthoDB" id="9801927at2"/>
<dbReference type="Proteomes" id="UP000001784">
    <property type="component" value="Chromosome"/>
</dbReference>
<dbReference type="GO" id="GO:0015934">
    <property type="term" value="C:large ribosomal subunit"/>
    <property type="evidence" value="ECO:0007669"/>
    <property type="project" value="InterPro"/>
</dbReference>
<dbReference type="GO" id="GO:0003735">
    <property type="term" value="F:structural constituent of ribosome"/>
    <property type="evidence" value="ECO:0007669"/>
    <property type="project" value="InterPro"/>
</dbReference>
<dbReference type="GO" id="GO:0006412">
    <property type="term" value="P:translation"/>
    <property type="evidence" value="ECO:0007669"/>
    <property type="project" value="UniProtKB-UniRule"/>
</dbReference>
<dbReference type="Gene3D" id="1.20.5.640">
    <property type="entry name" value="Single helix bin"/>
    <property type="match status" value="1"/>
</dbReference>
<dbReference type="HAMAP" id="MF_00340">
    <property type="entry name" value="Ribosomal_bL32"/>
    <property type="match status" value="1"/>
</dbReference>
<dbReference type="InterPro" id="IPR002677">
    <property type="entry name" value="Ribosomal_bL32"/>
</dbReference>
<dbReference type="InterPro" id="IPR044957">
    <property type="entry name" value="Ribosomal_bL32_bact"/>
</dbReference>
<dbReference type="InterPro" id="IPR011332">
    <property type="entry name" value="Ribosomal_zn-bd"/>
</dbReference>
<dbReference type="NCBIfam" id="TIGR01031">
    <property type="entry name" value="rpmF_bact"/>
    <property type="match status" value="1"/>
</dbReference>
<dbReference type="PANTHER" id="PTHR35534">
    <property type="entry name" value="50S RIBOSOMAL PROTEIN L32"/>
    <property type="match status" value="1"/>
</dbReference>
<dbReference type="PANTHER" id="PTHR35534:SF1">
    <property type="entry name" value="LARGE RIBOSOMAL SUBUNIT PROTEIN BL32"/>
    <property type="match status" value="1"/>
</dbReference>
<dbReference type="Pfam" id="PF01783">
    <property type="entry name" value="Ribosomal_L32p"/>
    <property type="match status" value="1"/>
</dbReference>
<dbReference type="SUPFAM" id="SSF57829">
    <property type="entry name" value="Zn-binding ribosomal proteins"/>
    <property type="match status" value="1"/>
</dbReference>
<comment type="similarity">
    <text evidence="1">Belongs to the bacterial ribosomal protein bL32 family.</text>
</comment>